<sequence length="163" mass="18152">MASVHGITVKNAQGEDTPLSNYQGKVLIIVNVASQCGLTNSNYNQFKELLDVYKKDGLEVLAFPCNQFGGQEPSCEIDIAAFVADKFKFEPTLFQKIDVNGDNTAPLYKFLKQEKGGFLVDAIKWNFTKFLVGRDGHVIKRFSPTTEPKDMKKDIEAALQAKL</sequence>
<accession>O62327</accession>
<evidence type="ECO:0000250" key="1"/>
<evidence type="ECO:0000305" key="2"/>
<feature type="chain" id="PRO_0000066647" description="Glutathione peroxidase 2">
    <location>
        <begin position="1"/>
        <end position="163"/>
    </location>
</feature>
<feature type="active site" evidence="1">
    <location>
        <position position="36"/>
    </location>
</feature>
<keyword id="KW-0963">Cytoplasm</keyword>
<keyword id="KW-0560">Oxidoreductase</keyword>
<keyword id="KW-0575">Peroxidase</keyword>
<keyword id="KW-1185">Reference proteome</keyword>
<name>GPX2_CAEEL</name>
<proteinExistence type="inferred from homology"/>
<dbReference type="EC" id="1.11.1.9"/>
<dbReference type="EMBL" id="Z83119">
    <property type="protein sequence ID" value="CAB05581.1"/>
    <property type="molecule type" value="Genomic_DNA"/>
</dbReference>
<dbReference type="PIR" id="T23936">
    <property type="entry name" value="T23936"/>
</dbReference>
<dbReference type="RefSeq" id="NP_001366911.1">
    <property type="nucleotide sequence ID" value="NM_001381666.1"/>
</dbReference>
<dbReference type="RefSeq" id="NP_497078.1">
    <property type="nucleotide sequence ID" value="NM_064677.4"/>
</dbReference>
<dbReference type="SMR" id="O62327"/>
<dbReference type="BioGRID" id="52317">
    <property type="interactions" value="4"/>
</dbReference>
<dbReference type="FunCoup" id="O62327">
    <property type="interactions" value="1483"/>
</dbReference>
<dbReference type="STRING" id="6239.R05H10.5b.1"/>
<dbReference type="PeroxiBase" id="3747">
    <property type="entry name" value="CelGPx02"/>
</dbReference>
<dbReference type="PaxDb" id="6239-R05H10.5b.1"/>
<dbReference type="PeptideAtlas" id="O62327"/>
<dbReference type="EnsemblMetazoa" id="R05H10.5a.1">
    <property type="protein sequence ID" value="R05H10.5a.1"/>
    <property type="gene ID" value="WBGene00011045"/>
</dbReference>
<dbReference type="GeneID" id="187630"/>
<dbReference type="UCSC" id="R05H10.5">
    <property type="organism name" value="c. elegans"/>
</dbReference>
<dbReference type="AGR" id="WB:WBGene00011045"/>
<dbReference type="WormBase" id="R05H10.5a">
    <property type="protein sequence ID" value="CE18107"/>
    <property type="gene ID" value="WBGene00011045"/>
    <property type="gene designation" value="gpx-2"/>
</dbReference>
<dbReference type="eggNOG" id="KOG1651">
    <property type="taxonomic scope" value="Eukaryota"/>
</dbReference>
<dbReference type="HOGENOM" id="CLU_029507_0_1_1"/>
<dbReference type="InParanoid" id="O62327"/>
<dbReference type="PhylomeDB" id="O62327"/>
<dbReference type="PRO" id="PR:O62327"/>
<dbReference type="Proteomes" id="UP000001940">
    <property type="component" value="Chromosome II"/>
</dbReference>
<dbReference type="Bgee" id="WBGene00011045">
    <property type="expression patterns" value="Expressed in larva and 3 other cell types or tissues"/>
</dbReference>
<dbReference type="ExpressionAtlas" id="O62327">
    <property type="expression patterns" value="baseline"/>
</dbReference>
<dbReference type="GO" id="GO:0005737">
    <property type="term" value="C:cytoplasm"/>
    <property type="evidence" value="ECO:0007669"/>
    <property type="project" value="UniProtKB-SubCell"/>
</dbReference>
<dbReference type="GO" id="GO:0004602">
    <property type="term" value="F:glutathione peroxidase activity"/>
    <property type="evidence" value="ECO:0007669"/>
    <property type="project" value="UniProtKB-EC"/>
</dbReference>
<dbReference type="GO" id="GO:0004601">
    <property type="term" value="F:peroxidase activity"/>
    <property type="evidence" value="ECO:0000318"/>
    <property type="project" value="GO_Central"/>
</dbReference>
<dbReference type="GO" id="GO:0006979">
    <property type="term" value="P:response to oxidative stress"/>
    <property type="evidence" value="ECO:0007669"/>
    <property type="project" value="InterPro"/>
</dbReference>
<dbReference type="CDD" id="cd00340">
    <property type="entry name" value="GSH_Peroxidase"/>
    <property type="match status" value="1"/>
</dbReference>
<dbReference type="FunFam" id="3.40.30.10:FF:000270">
    <property type="entry name" value="Glutathione peroxidase"/>
    <property type="match status" value="1"/>
</dbReference>
<dbReference type="Gene3D" id="3.40.30.10">
    <property type="entry name" value="Glutaredoxin"/>
    <property type="match status" value="1"/>
</dbReference>
<dbReference type="InterPro" id="IPR000889">
    <property type="entry name" value="Glutathione_peroxidase"/>
</dbReference>
<dbReference type="InterPro" id="IPR029759">
    <property type="entry name" value="GPX_AS"/>
</dbReference>
<dbReference type="InterPro" id="IPR029760">
    <property type="entry name" value="GPX_CS"/>
</dbReference>
<dbReference type="InterPro" id="IPR036249">
    <property type="entry name" value="Thioredoxin-like_sf"/>
</dbReference>
<dbReference type="PANTHER" id="PTHR11592">
    <property type="entry name" value="GLUTATHIONE PEROXIDASE"/>
    <property type="match status" value="1"/>
</dbReference>
<dbReference type="PANTHER" id="PTHR11592:SF2">
    <property type="entry name" value="GLUTATHIONE PEROXIDASE 2"/>
    <property type="match status" value="1"/>
</dbReference>
<dbReference type="Pfam" id="PF00255">
    <property type="entry name" value="GSHPx"/>
    <property type="match status" value="1"/>
</dbReference>
<dbReference type="PIRSF" id="PIRSF000303">
    <property type="entry name" value="Glutathion_perox"/>
    <property type="match status" value="1"/>
</dbReference>
<dbReference type="PRINTS" id="PR01011">
    <property type="entry name" value="GLUTPROXDASE"/>
</dbReference>
<dbReference type="SUPFAM" id="SSF52833">
    <property type="entry name" value="Thioredoxin-like"/>
    <property type="match status" value="1"/>
</dbReference>
<dbReference type="PROSITE" id="PS00460">
    <property type="entry name" value="GLUTATHIONE_PEROXID_1"/>
    <property type="match status" value="1"/>
</dbReference>
<dbReference type="PROSITE" id="PS00763">
    <property type="entry name" value="GLUTATHIONE_PEROXID_2"/>
    <property type="match status" value="1"/>
</dbReference>
<dbReference type="PROSITE" id="PS51355">
    <property type="entry name" value="GLUTATHIONE_PEROXID_3"/>
    <property type="match status" value="1"/>
</dbReference>
<reference key="1">
    <citation type="journal article" date="1998" name="Science">
        <title>Genome sequence of the nematode C. elegans: a platform for investigating biology.</title>
        <authorList>
            <consortium name="The C. elegans sequencing consortium"/>
        </authorList>
    </citation>
    <scope>NUCLEOTIDE SEQUENCE [LARGE SCALE GENOMIC DNA]</scope>
    <source>
        <strain>Bristol N2</strain>
    </source>
</reference>
<comment type="function">
    <text evidence="1">May constitute a glutathione peroxidase-like protective system against oxidative stresses.</text>
</comment>
<comment type="catalytic activity">
    <reaction>
        <text>2 glutathione + H2O2 = glutathione disulfide + 2 H2O</text>
        <dbReference type="Rhea" id="RHEA:16833"/>
        <dbReference type="ChEBI" id="CHEBI:15377"/>
        <dbReference type="ChEBI" id="CHEBI:16240"/>
        <dbReference type="ChEBI" id="CHEBI:57925"/>
        <dbReference type="ChEBI" id="CHEBI:58297"/>
        <dbReference type="EC" id="1.11.1.9"/>
    </reaction>
</comment>
<comment type="subcellular location">
    <subcellularLocation>
        <location evidence="2">Cytoplasm</location>
    </subcellularLocation>
</comment>
<comment type="similarity">
    <text evidence="2">Belongs to the glutathione peroxidase family.</text>
</comment>
<gene>
    <name type="primary">gpx-2</name>
    <name type="ORF">R05H10.5</name>
</gene>
<organism>
    <name type="scientific">Caenorhabditis elegans</name>
    <dbReference type="NCBI Taxonomy" id="6239"/>
    <lineage>
        <taxon>Eukaryota</taxon>
        <taxon>Metazoa</taxon>
        <taxon>Ecdysozoa</taxon>
        <taxon>Nematoda</taxon>
        <taxon>Chromadorea</taxon>
        <taxon>Rhabditida</taxon>
        <taxon>Rhabditina</taxon>
        <taxon>Rhabditomorpha</taxon>
        <taxon>Rhabditoidea</taxon>
        <taxon>Rhabditidae</taxon>
        <taxon>Peloderinae</taxon>
        <taxon>Caenorhabditis</taxon>
    </lineage>
</organism>
<protein>
    <recommendedName>
        <fullName>Glutathione peroxidase 2</fullName>
        <ecNumber>1.11.1.9</ecNumber>
    </recommendedName>
</protein>